<feature type="signal peptide" evidence="4">
    <location>
        <begin position="1"/>
        <end position="27"/>
    </location>
</feature>
<feature type="chain" id="PRO_0000389464" description="Probably inactive leucine-rich repeat receptor-like protein kinase At5g48380">
    <location>
        <begin position="28"/>
        <end position="620"/>
    </location>
</feature>
<feature type="topological domain" description="Extracellular" evidence="4">
    <location>
        <begin position="28"/>
        <end position="228"/>
    </location>
</feature>
<feature type="transmembrane region" description="Helical" evidence="4">
    <location>
        <begin position="229"/>
        <end position="249"/>
    </location>
</feature>
<feature type="topological domain" description="Cytoplasmic" evidence="4">
    <location>
        <begin position="250"/>
        <end position="620"/>
    </location>
</feature>
<feature type="repeat" description="LRR 1">
    <location>
        <begin position="101"/>
        <end position="124"/>
    </location>
</feature>
<feature type="repeat" description="LRR 2">
    <location>
        <begin position="126"/>
        <end position="148"/>
    </location>
</feature>
<feature type="repeat" description="LRR 3">
    <location>
        <begin position="150"/>
        <end position="172"/>
    </location>
</feature>
<feature type="repeat" description="LRR 4">
    <location>
        <begin position="174"/>
        <end position="196"/>
    </location>
</feature>
<feature type="domain" description="Protein kinase" evidence="5">
    <location>
        <begin position="303"/>
        <end position="596"/>
    </location>
</feature>
<feature type="binding site" evidence="5">
    <location>
        <begin position="309"/>
        <end position="317"/>
    </location>
    <ligand>
        <name>ATP</name>
        <dbReference type="ChEBI" id="CHEBI:30616"/>
    </ligand>
</feature>
<feature type="binding site" evidence="5">
    <location>
        <position position="331"/>
    </location>
    <ligand>
        <name>ATP</name>
        <dbReference type="ChEBI" id="CHEBI:30616"/>
    </ligand>
</feature>
<feature type="modified residue" description="Phosphothreonine" evidence="3">
    <location>
        <position position="300"/>
    </location>
</feature>
<feature type="modified residue" description="Phosphothreonine" evidence="2">
    <location>
        <position position="463"/>
    </location>
</feature>
<feature type="modified residue" description="Phosphotyrosine" evidence="1">
    <location>
        <position position="479"/>
    </location>
</feature>
<feature type="modified residue" description="Phosphothreonine" evidence="1">
    <location>
        <position position="482"/>
    </location>
</feature>
<feature type="glycosylation site" description="N-linked (GlcNAc...) asparagine" evidence="4">
    <location>
        <position position="56"/>
    </location>
</feature>
<feature type="glycosylation site" description="N-linked (GlcNAc...) asparagine" evidence="4">
    <location>
        <position position="111"/>
    </location>
</feature>
<feature type="glycosylation site" description="N-linked (GlcNAc...) asparagine" evidence="4">
    <location>
        <position position="119"/>
    </location>
</feature>
<feature type="glycosylation site" description="N-linked (GlcNAc...) asparagine" evidence="4">
    <location>
        <position position="147"/>
    </location>
</feature>
<feature type="glycosylation site" description="N-linked (GlcNAc...) asparagine" evidence="4">
    <location>
        <position position="193"/>
    </location>
</feature>
<feature type="sequence conflict" description="In Ref. 1; AAN60365." evidence="7" ref="1">
    <original>L</original>
    <variation>I</variation>
    <location>
        <position position="214"/>
    </location>
</feature>
<feature type="sequence conflict" description="In Ref. 4; AAL32637." evidence="7" ref="4">
    <original>G</original>
    <variation>R</variation>
    <location>
        <position position="275"/>
    </location>
</feature>
<proteinExistence type="evidence at protein level"/>
<sequence length="620" mass="69142">MMMGRLVFVIWLYNCLCLLLLSSLVDADQANIDCLRTFKSQVEDPNRYLSTWVFGNETAGYICKFSGVTCWHDDENRVLSIKLSGYGLRGVFPPAVKLCADLTGLDLSRNNFSGPLPANISTLIPLVTILDLSYNSFSGEIPMLISNITFLNTLMLQHNQFTGTLPPQLAQLGRLKTFSVSDNRLVGPIPNFNQTLQFKQELFANNLDLCGKPLDDCKSASSSRGKVVIIAAVGGLTAAALVVGVVLFFYFRKLGAVRKKQDDPEGNRWAKSLKGQKGVKVFMFKKSVSKMKLSDLMKATEEFKKDNIIATGRTGTMYKGRLEDGSLLMIKRLQDSQRSEKEFDAEMKTLGSVKNRNLVPLLGYCVANKERLLMYEYMANGYLYDQLHPADEESFKPLDWPSRLKIAIGTAKGLAWLHHSCNPRIIHRNISSKCILLTAEFEPKISDFGLARLMNPIDTHLSTFVNGEFGDFGYVAPEYSRTMVATPKGDVYSFGVVLLELVTGQKATSVTKVSEEKAEEENFKGNLVEWITKLSSESKLQEAIDRSLLGNGVDDEIFKVLKVACNCVLPEIAKQRPTMFEVYQLLRAIGESYNFTADDDILIPSESGEGDFIEELIVAR</sequence>
<keyword id="KW-0067">ATP-binding</keyword>
<keyword id="KW-1003">Cell membrane</keyword>
<keyword id="KW-0325">Glycoprotein</keyword>
<keyword id="KW-0433">Leucine-rich repeat</keyword>
<keyword id="KW-0472">Membrane</keyword>
<keyword id="KW-0547">Nucleotide-binding</keyword>
<keyword id="KW-0597">Phosphoprotein</keyword>
<keyword id="KW-0675">Receptor</keyword>
<keyword id="KW-1185">Reference proteome</keyword>
<keyword id="KW-0677">Repeat</keyword>
<keyword id="KW-0732">Signal</keyword>
<keyword id="KW-0812">Transmembrane</keyword>
<keyword id="KW-1133">Transmembrane helix</keyword>
<reference key="1">
    <citation type="submission" date="1998-08" db="EMBL/GenBank/DDBJ databases">
        <title>Signal peptide selection derived cDNAs from Arabidopsis thaliana leaves and guard cells.</title>
        <authorList>
            <person name="Stracke R."/>
            <person name="Palme K."/>
        </authorList>
    </citation>
    <scope>NUCLEOTIDE SEQUENCE [MRNA]</scope>
</reference>
<reference key="2">
    <citation type="journal article" date="2000" name="DNA Res.">
        <title>Structural analysis of Arabidopsis thaliana chromosome 5. X. Sequence features of the regions of 3,076,755 bp covered by sixty P1 and TAC clones.</title>
        <authorList>
            <person name="Sato S."/>
            <person name="Nakamura Y."/>
            <person name="Kaneko T."/>
            <person name="Katoh T."/>
            <person name="Asamizu E."/>
            <person name="Kotani H."/>
            <person name="Tabata S."/>
        </authorList>
    </citation>
    <scope>NUCLEOTIDE SEQUENCE [LARGE SCALE GENOMIC DNA]</scope>
    <source>
        <strain>cv. Columbia</strain>
    </source>
</reference>
<reference key="3">
    <citation type="journal article" date="2017" name="Plant J.">
        <title>Araport11: a complete reannotation of the Arabidopsis thaliana reference genome.</title>
        <authorList>
            <person name="Cheng C.Y."/>
            <person name="Krishnakumar V."/>
            <person name="Chan A.P."/>
            <person name="Thibaud-Nissen F."/>
            <person name="Schobel S."/>
            <person name="Town C.D."/>
        </authorList>
    </citation>
    <scope>GENOME REANNOTATION</scope>
    <source>
        <strain>cv. Columbia</strain>
    </source>
</reference>
<reference key="4">
    <citation type="journal article" date="2003" name="Science">
        <title>Empirical analysis of transcriptional activity in the Arabidopsis genome.</title>
        <authorList>
            <person name="Yamada K."/>
            <person name="Lim J."/>
            <person name="Dale J.M."/>
            <person name="Chen H."/>
            <person name="Shinn P."/>
            <person name="Palm C.J."/>
            <person name="Southwick A.M."/>
            <person name="Wu H.C."/>
            <person name="Kim C.J."/>
            <person name="Nguyen M."/>
            <person name="Pham P.K."/>
            <person name="Cheuk R.F."/>
            <person name="Karlin-Newmann G."/>
            <person name="Liu S.X."/>
            <person name="Lam B."/>
            <person name="Sakano H."/>
            <person name="Wu T."/>
            <person name="Yu G."/>
            <person name="Miranda M."/>
            <person name="Quach H.L."/>
            <person name="Tripp M."/>
            <person name="Chang C.H."/>
            <person name="Lee J.M."/>
            <person name="Toriumi M.J."/>
            <person name="Chan M.M."/>
            <person name="Tang C.C."/>
            <person name="Onodera C.S."/>
            <person name="Deng J.M."/>
            <person name="Akiyama K."/>
            <person name="Ansari Y."/>
            <person name="Arakawa T."/>
            <person name="Banh J."/>
            <person name="Banno F."/>
            <person name="Bowser L."/>
            <person name="Brooks S.Y."/>
            <person name="Carninci P."/>
            <person name="Chao Q."/>
            <person name="Choy N."/>
            <person name="Enju A."/>
            <person name="Goldsmith A.D."/>
            <person name="Gurjal M."/>
            <person name="Hansen N.F."/>
            <person name="Hayashizaki Y."/>
            <person name="Johnson-Hopson C."/>
            <person name="Hsuan V.W."/>
            <person name="Iida K."/>
            <person name="Karnes M."/>
            <person name="Khan S."/>
            <person name="Koesema E."/>
            <person name="Ishida J."/>
            <person name="Jiang P.X."/>
            <person name="Jones T."/>
            <person name="Kawai J."/>
            <person name="Kamiya A."/>
            <person name="Meyers C."/>
            <person name="Nakajima M."/>
            <person name="Narusaka M."/>
            <person name="Seki M."/>
            <person name="Sakurai T."/>
            <person name="Satou M."/>
            <person name="Tamse R."/>
            <person name="Vaysberg M."/>
            <person name="Wallender E.K."/>
            <person name="Wong C."/>
            <person name="Yamamura Y."/>
            <person name="Yuan S."/>
            <person name="Shinozaki K."/>
            <person name="Davis R.W."/>
            <person name="Theologis A."/>
            <person name="Ecker J.R."/>
        </authorList>
    </citation>
    <scope>NUCLEOTIDE SEQUENCE [LARGE SCALE MRNA]</scope>
    <source>
        <strain>cv. Columbia</strain>
    </source>
</reference>
<reference key="5">
    <citation type="journal article" date="2010" name="BMC Genomics">
        <title>Genome-wide cloning and sequence analysis of leucine-rich repeat receptor-like protein kinase genes in Arabidopsis thaliana.</title>
        <authorList>
            <person name="Gou X."/>
            <person name="He K."/>
            <person name="Yang H."/>
            <person name="Yuan T."/>
            <person name="Lin H."/>
            <person name="Clouse S.D."/>
            <person name="Li J."/>
        </authorList>
    </citation>
    <scope>NUCLEOTIDE SEQUENCE [LARGE SCALE MRNA]</scope>
    <source>
        <strain>cv. Columbia</strain>
    </source>
</reference>
<reference key="6">
    <citation type="journal article" date="2003" name="Mol. Cell. Proteomics">
        <title>Large-scale analysis of in vivo phosphorylated membrane proteins by immobilized metal ion affinity chromatography and mass spectrometry.</title>
        <authorList>
            <person name="Nuehse T.S."/>
            <person name="Stensballe A."/>
            <person name="Jensen O.N."/>
            <person name="Peck S.C."/>
        </authorList>
    </citation>
    <scope>SUBCELLULAR LOCATION</scope>
    <source>
        <strain>cv. La-0</strain>
    </source>
</reference>
<reference key="7">
    <citation type="journal article" date="2007" name="Mol. Cell. Proteomics">
        <title>A high content in lipid-modified peripheral proteins and integral receptor kinases features in the arabidopsis plasma membrane proteome.</title>
        <authorList>
            <person name="Marmagne A."/>
            <person name="Ferro M."/>
            <person name="Meinnel T."/>
            <person name="Bruley C."/>
            <person name="Kuhn L."/>
            <person name="Garin J."/>
            <person name="Barbier-Brygoo H."/>
            <person name="Ephritikhine G."/>
        </authorList>
    </citation>
    <scope>IDENTIFICATION BY MASS SPECTROMETRY</scope>
    <scope>SUBCELLULAR LOCATION [LARGE SCALE ANALYSIS]</scope>
</reference>
<evidence type="ECO:0000250" key="1">
    <source>
        <dbReference type="UniProtKB" id="Q94AG2"/>
    </source>
</evidence>
<evidence type="ECO:0000250" key="2">
    <source>
        <dbReference type="UniProtKB" id="Q94F62"/>
    </source>
</evidence>
<evidence type="ECO:0000250" key="3">
    <source>
        <dbReference type="UniProtKB" id="Q9LSI9"/>
    </source>
</evidence>
<evidence type="ECO:0000255" key="4"/>
<evidence type="ECO:0000255" key="5">
    <source>
        <dbReference type="PROSITE-ProRule" id="PRU00159"/>
    </source>
</evidence>
<evidence type="ECO:0000269" key="6">
    <source>
    </source>
</evidence>
<evidence type="ECO:0000305" key="7"/>
<evidence type="ECO:0000305" key="8">
    <source>
    </source>
</evidence>
<name>Y5838_ARATH</name>
<gene>
    <name type="ordered locus">At5g48380</name>
    <name type="ORF">K23F3.10</name>
    <name type="ORF">MJE7.1</name>
</gene>
<accession>Q9ASS4</accession>
<accession>Q8H771</accession>
<accession>Q8W4H2</accession>
<accession>Q9LV74</accession>
<comment type="interaction">
    <interactant intactId="EBI-6298290">
        <id>Q9ASS4</id>
    </interactant>
    <interactant intactId="EBI-1238687">
        <id>O04567</id>
        <label>At1g27190</label>
    </interactant>
    <organismsDiffer>false</organismsDiffer>
    <experiments>2</experiments>
</comment>
<comment type="interaction">
    <interactant intactId="EBI-6298290">
        <id>Q9ASS4</id>
    </interactant>
    <interactant intactId="EBI-20651957">
        <id>Q9ZQR3</id>
        <label>At2g14510</label>
    </interactant>
    <organismsDiffer>false</organismsDiffer>
    <experiments>2</experiments>
</comment>
<comment type="interaction">
    <interactant intactId="EBI-6298290">
        <id>Q9ASS4</id>
    </interactant>
    <interactant intactId="EBI-16902452">
        <id>Q8VYT3</id>
        <label>At4g30520</label>
    </interactant>
    <organismsDiffer>false</organismsDiffer>
    <experiments>2</experiments>
</comment>
<comment type="interaction">
    <interactant intactId="EBI-6298290">
        <id>Q9ASS4</id>
    </interactant>
    <interactant intactId="EBI-6298290">
        <id>Q9ASS4</id>
        <label>At5g48380</label>
    </interactant>
    <organismsDiffer>false</organismsDiffer>
    <experiments>2</experiments>
</comment>
<comment type="interaction">
    <interactant intactId="EBI-6298290">
        <id>Q9ASS4</id>
    </interactant>
    <interactant intactId="EBI-617138">
        <id>Q94F62</id>
        <label>BAK1</label>
    </interactant>
    <organismsDiffer>false</organismsDiffer>
    <experiments>6</experiments>
</comment>
<comment type="interaction">
    <interactant intactId="EBI-6298290">
        <id>Q9ASS4</id>
    </interactant>
    <interactant intactId="EBI-20653325">
        <id>O65440-2</id>
        <label>BAM3</label>
    </interactant>
    <organismsDiffer>false</organismsDiffer>
    <experiments>2</experiments>
</comment>
<comment type="interaction">
    <interactant intactId="EBI-6298290">
        <id>Q9ASS4</id>
    </interactant>
    <interactant intactId="EBI-16895926">
        <id>Q6XAT2</id>
        <label>ERL2</label>
    </interactant>
    <organismsDiffer>false</organismsDiffer>
    <experiments>2</experiments>
</comment>
<comment type="interaction">
    <interactant intactId="EBI-6298290">
        <id>Q9ASS4</id>
    </interactant>
    <interactant intactId="EBI-16924837">
        <id>Q9C8I6</id>
        <label>IOS1</label>
    </interactant>
    <organismsDiffer>false</organismsDiffer>
    <experiments>2</experiments>
</comment>
<comment type="interaction">
    <interactant intactId="EBI-6298290">
        <id>Q9ASS4</id>
    </interactant>
    <interactant intactId="EBI-20651739">
        <id>Q9ZVD4</id>
        <label>LRR-RLK</label>
    </interactant>
    <organismsDiffer>false</organismsDiffer>
    <experiments>2</experiments>
</comment>
<comment type="interaction">
    <interactant intactId="EBI-6298290">
        <id>Q9ASS4</id>
    </interactant>
    <interactant intactId="EBI-16146189">
        <id>Q9LFS4</id>
        <label>NIK1</label>
    </interactant>
    <organismsDiffer>false</organismsDiffer>
    <experiments>2</experiments>
</comment>
<comment type="interaction">
    <interactant intactId="EBI-6298290">
        <id>Q9ASS4</id>
    </interactant>
    <interactant intactId="EBI-1238953">
        <id>Q9ZRF9</id>
        <label>RPK1</label>
    </interactant>
    <organismsDiffer>false</organismsDiffer>
    <experiments>2</experiments>
</comment>
<comment type="interaction">
    <interactant intactId="EBI-6298290">
        <id>Q9ASS4</id>
    </interactant>
    <interactant intactId="EBI-1555537">
        <id>Q94AG2</id>
        <label>SERK1</label>
    </interactant>
    <organismsDiffer>false</organismsDiffer>
    <experiments>2</experiments>
</comment>
<comment type="interaction">
    <interactant intactId="EBI-6298290">
        <id>Q9ASS4</id>
    </interactant>
    <interactant intactId="EBI-6290483">
        <id>Q9SKG5</id>
        <label>SERK4</label>
    </interactant>
    <organismsDiffer>false</organismsDiffer>
    <experiments>2</experiments>
</comment>
<comment type="interaction">
    <interactant intactId="EBI-6298290">
        <id>Q9ASS4</id>
    </interactant>
    <interactant intactId="EBI-16954301">
        <id>Q9C8M9</id>
        <label>SRF6</label>
    </interactant>
    <organismsDiffer>false</organismsDiffer>
    <experiments>2</experiments>
</comment>
<comment type="interaction">
    <interactant intactId="EBI-6298290">
        <id>Q9ASS4</id>
    </interactant>
    <interactant intactId="EBI-17072125">
        <id>Q8RWZ1</id>
        <label>SUB</label>
    </interactant>
    <organismsDiffer>false</organismsDiffer>
    <experiments>2</experiments>
</comment>
<comment type="subcellular location">
    <subcellularLocation>
        <location evidence="6 8">Cell membrane</location>
        <topology evidence="6 8">Single-pass type I membrane protein</topology>
    </subcellularLocation>
</comment>
<comment type="domain">
    <text>The protein kinase domain is predicted to be catalytically inactive. Lacks the conserved Asp active site at position 429, which is replaced by an Asn residue.</text>
</comment>
<comment type="similarity">
    <text evidence="5">Belongs to the protein kinase superfamily. Ser/Thr protein kinase family.</text>
</comment>
<comment type="sequence caution" evidence="7">
    <conflict type="erroneous initiation">
        <sequence resource="EMBL-CDS" id="BAA96958"/>
    </conflict>
</comment>
<protein>
    <recommendedName>
        <fullName>Probably inactive leucine-rich repeat receptor-like protein kinase At5g48380</fullName>
    </recommendedName>
</protein>
<organism>
    <name type="scientific">Arabidopsis thaliana</name>
    <name type="common">Mouse-ear cress</name>
    <dbReference type="NCBI Taxonomy" id="3702"/>
    <lineage>
        <taxon>Eukaryota</taxon>
        <taxon>Viridiplantae</taxon>
        <taxon>Streptophyta</taxon>
        <taxon>Embryophyta</taxon>
        <taxon>Tracheophyta</taxon>
        <taxon>Spermatophyta</taxon>
        <taxon>Magnoliopsida</taxon>
        <taxon>eudicotyledons</taxon>
        <taxon>Gunneridae</taxon>
        <taxon>Pentapetalae</taxon>
        <taxon>rosids</taxon>
        <taxon>malvids</taxon>
        <taxon>Brassicales</taxon>
        <taxon>Brassicaceae</taxon>
        <taxon>Camelineae</taxon>
        <taxon>Arabidopsis</taxon>
    </lineage>
</organism>
<dbReference type="EMBL" id="AF083807">
    <property type="protein sequence ID" value="AAN60365.1"/>
    <property type="molecule type" value="mRNA"/>
</dbReference>
<dbReference type="EMBL" id="AB020745">
    <property type="protein sequence ID" value="BAA96958.1"/>
    <property type="status" value="ALT_INIT"/>
    <property type="molecule type" value="Genomic_DNA"/>
</dbReference>
<dbReference type="EMBL" id="CP002688">
    <property type="protein sequence ID" value="AED95662.1"/>
    <property type="molecule type" value="Genomic_DNA"/>
</dbReference>
<dbReference type="EMBL" id="AF367312">
    <property type="protein sequence ID" value="AAK32899.1"/>
    <property type="molecule type" value="mRNA"/>
</dbReference>
<dbReference type="EMBL" id="AY062559">
    <property type="protein sequence ID" value="AAL32637.1"/>
    <property type="molecule type" value="mRNA"/>
</dbReference>
<dbReference type="EMBL" id="AY074386">
    <property type="protein sequence ID" value="AAL67082.1"/>
    <property type="molecule type" value="mRNA"/>
</dbReference>
<dbReference type="EMBL" id="FJ708793">
    <property type="protein sequence ID" value="ACN59384.1"/>
    <property type="molecule type" value="mRNA"/>
</dbReference>
<dbReference type="SMR" id="Q9ASS4"/>
<dbReference type="BioGRID" id="20138">
    <property type="interactions" value="74"/>
</dbReference>
<dbReference type="FunCoup" id="Q9ASS4">
    <property type="interactions" value="995"/>
</dbReference>
<dbReference type="IntAct" id="Q9ASS4">
    <property type="interactions" value="61"/>
</dbReference>
<dbReference type="STRING" id="3702.Q9ASS4"/>
<dbReference type="GlyGen" id="Q9ASS4">
    <property type="glycosylation" value="5 sites"/>
</dbReference>
<dbReference type="iPTMnet" id="Q9ASS4"/>
<dbReference type="PaxDb" id="3702-AT5G48380.1"/>
<dbReference type="ProteomicsDB" id="243120"/>
<dbReference type="EnsemblPlants" id="AT5G48380.1">
    <property type="protein sequence ID" value="AT5G48380.1"/>
    <property type="gene ID" value="AT5G48380"/>
</dbReference>
<dbReference type="GeneID" id="834892"/>
<dbReference type="Gramene" id="AT5G48380.1">
    <property type="protein sequence ID" value="AT5G48380.1"/>
    <property type="gene ID" value="AT5G48380"/>
</dbReference>
<dbReference type="KEGG" id="ath:AT5G48380"/>
<dbReference type="Araport" id="AT5G48380"/>
<dbReference type="TAIR" id="AT5G48380">
    <property type="gene designation" value="BIR1"/>
</dbReference>
<dbReference type="eggNOG" id="ENOG502QSSB">
    <property type="taxonomic scope" value="Eukaryota"/>
</dbReference>
<dbReference type="HOGENOM" id="CLU_000288_92_6_1"/>
<dbReference type="InParanoid" id="Q9ASS4"/>
<dbReference type="OMA" id="GMFFFVR"/>
<dbReference type="OrthoDB" id="2151624at2759"/>
<dbReference type="PhylomeDB" id="Q9ASS4"/>
<dbReference type="PRO" id="PR:Q9ASS4"/>
<dbReference type="Proteomes" id="UP000006548">
    <property type="component" value="Chromosome 5"/>
</dbReference>
<dbReference type="ExpressionAtlas" id="Q9ASS4">
    <property type="expression patterns" value="baseline and differential"/>
</dbReference>
<dbReference type="GO" id="GO:0005886">
    <property type="term" value="C:plasma membrane"/>
    <property type="evidence" value="ECO:0000314"/>
    <property type="project" value="TAIR"/>
</dbReference>
<dbReference type="GO" id="GO:0009506">
    <property type="term" value="C:plasmodesma"/>
    <property type="evidence" value="ECO:0007005"/>
    <property type="project" value="TAIR"/>
</dbReference>
<dbReference type="GO" id="GO:0005524">
    <property type="term" value="F:ATP binding"/>
    <property type="evidence" value="ECO:0007669"/>
    <property type="project" value="UniProtKB-KW"/>
</dbReference>
<dbReference type="GO" id="GO:0042802">
    <property type="term" value="F:identical protein binding"/>
    <property type="evidence" value="ECO:0000353"/>
    <property type="project" value="IntAct"/>
</dbReference>
<dbReference type="GO" id="GO:0016301">
    <property type="term" value="F:kinase activity"/>
    <property type="evidence" value="ECO:0000314"/>
    <property type="project" value="UniProtKB"/>
</dbReference>
<dbReference type="GO" id="GO:0004672">
    <property type="term" value="F:protein kinase activity"/>
    <property type="evidence" value="ECO:0000314"/>
    <property type="project" value="TAIR"/>
</dbReference>
<dbReference type="GO" id="GO:0033612">
    <property type="term" value="F:receptor serine/threonine kinase binding"/>
    <property type="evidence" value="ECO:0000353"/>
    <property type="project" value="UniProtKB"/>
</dbReference>
<dbReference type="GO" id="GO:0042742">
    <property type="term" value="P:defense response to bacterium"/>
    <property type="evidence" value="ECO:0000314"/>
    <property type="project" value="UniProtKB"/>
</dbReference>
<dbReference type="GO" id="GO:0031348">
    <property type="term" value="P:negative regulation of defense response"/>
    <property type="evidence" value="ECO:0000315"/>
    <property type="project" value="TAIR"/>
</dbReference>
<dbReference type="GO" id="GO:0009626">
    <property type="term" value="P:plant-type hypersensitive response"/>
    <property type="evidence" value="ECO:0000315"/>
    <property type="project" value="UniProtKB"/>
</dbReference>
<dbReference type="CDD" id="cd14066">
    <property type="entry name" value="STKc_IRAK"/>
    <property type="match status" value="1"/>
</dbReference>
<dbReference type="FunFam" id="1.10.510.10:FF:000609">
    <property type="entry name" value="Inactive LRR receptor-like serine/threonine-protein kinase BIR2"/>
    <property type="match status" value="1"/>
</dbReference>
<dbReference type="FunFam" id="3.30.200.20:FF:000428">
    <property type="entry name" value="Inactive LRR receptor-like serine/threonine-protein kinase BIR2"/>
    <property type="match status" value="1"/>
</dbReference>
<dbReference type="FunFam" id="3.80.10.10:FF:000400">
    <property type="entry name" value="Nuclear pore complex protein NUP107"/>
    <property type="match status" value="1"/>
</dbReference>
<dbReference type="Gene3D" id="3.30.200.20">
    <property type="entry name" value="Phosphorylase Kinase, domain 1"/>
    <property type="match status" value="1"/>
</dbReference>
<dbReference type="Gene3D" id="3.80.10.10">
    <property type="entry name" value="Ribonuclease Inhibitor"/>
    <property type="match status" value="1"/>
</dbReference>
<dbReference type="Gene3D" id="1.10.510.10">
    <property type="entry name" value="Transferase(Phosphotransferase) domain 1"/>
    <property type="match status" value="1"/>
</dbReference>
<dbReference type="InterPro" id="IPR011009">
    <property type="entry name" value="Kinase-like_dom_sf"/>
</dbReference>
<dbReference type="InterPro" id="IPR001611">
    <property type="entry name" value="Leu-rich_rpt"/>
</dbReference>
<dbReference type="InterPro" id="IPR032675">
    <property type="entry name" value="LRR_dom_sf"/>
</dbReference>
<dbReference type="InterPro" id="IPR013210">
    <property type="entry name" value="LRR_N_plant-typ"/>
</dbReference>
<dbReference type="InterPro" id="IPR051824">
    <property type="entry name" value="LRR_Rcpt-Like_S/T_Kinase"/>
</dbReference>
<dbReference type="InterPro" id="IPR000719">
    <property type="entry name" value="Prot_kinase_dom"/>
</dbReference>
<dbReference type="InterPro" id="IPR001245">
    <property type="entry name" value="Ser-Thr/Tyr_kinase_cat_dom"/>
</dbReference>
<dbReference type="PANTHER" id="PTHR48006">
    <property type="entry name" value="LEUCINE-RICH REPEAT-CONTAINING PROTEIN DDB_G0281931-RELATED"/>
    <property type="match status" value="1"/>
</dbReference>
<dbReference type="PANTHER" id="PTHR48006:SF88">
    <property type="entry name" value="LRR RECEPTOR-LIKE KINASE FAMILY PROTEIN"/>
    <property type="match status" value="1"/>
</dbReference>
<dbReference type="Pfam" id="PF00560">
    <property type="entry name" value="LRR_1"/>
    <property type="match status" value="3"/>
</dbReference>
<dbReference type="Pfam" id="PF08263">
    <property type="entry name" value="LRRNT_2"/>
    <property type="match status" value="1"/>
</dbReference>
<dbReference type="Pfam" id="PF07714">
    <property type="entry name" value="PK_Tyr_Ser-Thr"/>
    <property type="match status" value="1"/>
</dbReference>
<dbReference type="SUPFAM" id="SSF52058">
    <property type="entry name" value="L domain-like"/>
    <property type="match status" value="1"/>
</dbReference>
<dbReference type="SUPFAM" id="SSF56112">
    <property type="entry name" value="Protein kinase-like (PK-like)"/>
    <property type="match status" value="1"/>
</dbReference>
<dbReference type="PROSITE" id="PS50011">
    <property type="entry name" value="PROTEIN_KINASE_DOM"/>
    <property type="match status" value="1"/>
</dbReference>